<name>GLPK_RALPJ</name>
<dbReference type="EC" id="2.7.1.30" evidence="1"/>
<dbReference type="EMBL" id="CP001068">
    <property type="protein sequence ID" value="ACD28456.1"/>
    <property type="molecule type" value="Genomic_DNA"/>
</dbReference>
<dbReference type="SMR" id="B2UF87"/>
<dbReference type="STRING" id="402626.Rpic_3334"/>
<dbReference type="KEGG" id="rpi:Rpic_3334"/>
<dbReference type="PATRIC" id="fig|402626.5.peg.4468"/>
<dbReference type="eggNOG" id="COG0554">
    <property type="taxonomic scope" value="Bacteria"/>
</dbReference>
<dbReference type="HOGENOM" id="CLU_009281_2_3_4"/>
<dbReference type="UniPathway" id="UPA00618">
    <property type="reaction ID" value="UER00672"/>
</dbReference>
<dbReference type="GO" id="GO:0005829">
    <property type="term" value="C:cytosol"/>
    <property type="evidence" value="ECO:0007669"/>
    <property type="project" value="TreeGrafter"/>
</dbReference>
<dbReference type="GO" id="GO:0005524">
    <property type="term" value="F:ATP binding"/>
    <property type="evidence" value="ECO:0007669"/>
    <property type="project" value="UniProtKB-UniRule"/>
</dbReference>
<dbReference type="GO" id="GO:0004370">
    <property type="term" value="F:glycerol kinase activity"/>
    <property type="evidence" value="ECO:0000250"/>
    <property type="project" value="UniProtKB"/>
</dbReference>
<dbReference type="GO" id="GO:0019563">
    <property type="term" value="P:glycerol catabolic process"/>
    <property type="evidence" value="ECO:0007669"/>
    <property type="project" value="UniProtKB-UniRule"/>
</dbReference>
<dbReference type="GO" id="GO:0006071">
    <property type="term" value="P:glycerol metabolic process"/>
    <property type="evidence" value="ECO:0000250"/>
    <property type="project" value="UniProtKB"/>
</dbReference>
<dbReference type="GO" id="GO:0006072">
    <property type="term" value="P:glycerol-3-phosphate metabolic process"/>
    <property type="evidence" value="ECO:0007669"/>
    <property type="project" value="InterPro"/>
</dbReference>
<dbReference type="CDD" id="cd07786">
    <property type="entry name" value="FGGY_EcGK_like"/>
    <property type="match status" value="1"/>
</dbReference>
<dbReference type="FunFam" id="3.30.420.40:FF:000007">
    <property type="entry name" value="Glycerol kinase"/>
    <property type="match status" value="1"/>
</dbReference>
<dbReference type="FunFam" id="3.30.420.40:FF:000008">
    <property type="entry name" value="Glycerol kinase"/>
    <property type="match status" value="1"/>
</dbReference>
<dbReference type="Gene3D" id="3.30.420.40">
    <property type="match status" value="2"/>
</dbReference>
<dbReference type="HAMAP" id="MF_00186">
    <property type="entry name" value="Glycerol_kin"/>
    <property type="match status" value="1"/>
</dbReference>
<dbReference type="InterPro" id="IPR043129">
    <property type="entry name" value="ATPase_NBD"/>
</dbReference>
<dbReference type="InterPro" id="IPR000577">
    <property type="entry name" value="Carb_kinase_FGGY"/>
</dbReference>
<dbReference type="InterPro" id="IPR018483">
    <property type="entry name" value="Carb_kinase_FGGY_CS"/>
</dbReference>
<dbReference type="InterPro" id="IPR018485">
    <property type="entry name" value="FGGY_C"/>
</dbReference>
<dbReference type="InterPro" id="IPR018484">
    <property type="entry name" value="FGGY_N"/>
</dbReference>
<dbReference type="InterPro" id="IPR005999">
    <property type="entry name" value="Glycerol_kin"/>
</dbReference>
<dbReference type="NCBIfam" id="TIGR01311">
    <property type="entry name" value="glycerol_kin"/>
    <property type="match status" value="1"/>
</dbReference>
<dbReference type="NCBIfam" id="NF000756">
    <property type="entry name" value="PRK00047.1"/>
    <property type="match status" value="1"/>
</dbReference>
<dbReference type="PANTHER" id="PTHR10196:SF69">
    <property type="entry name" value="GLYCEROL KINASE"/>
    <property type="match status" value="1"/>
</dbReference>
<dbReference type="PANTHER" id="PTHR10196">
    <property type="entry name" value="SUGAR KINASE"/>
    <property type="match status" value="1"/>
</dbReference>
<dbReference type="Pfam" id="PF02782">
    <property type="entry name" value="FGGY_C"/>
    <property type="match status" value="1"/>
</dbReference>
<dbReference type="Pfam" id="PF00370">
    <property type="entry name" value="FGGY_N"/>
    <property type="match status" value="1"/>
</dbReference>
<dbReference type="PIRSF" id="PIRSF000538">
    <property type="entry name" value="GlpK"/>
    <property type="match status" value="1"/>
</dbReference>
<dbReference type="SUPFAM" id="SSF53067">
    <property type="entry name" value="Actin-like ATPase domain"/>
    <property type="match status" value="2"/>
</dbReference>
<dbReference type="PROSITE" id="PS00933">
    <property type="entry name" value="FGGY_KINASES_1"/>
    <property type="match status" value="1"/>
</dbReference>
<dbReference type="PROSITE" id="PS00445">
    <property type="entry name" value="FGGY_KINASES_2"/>
    <property type="match status" value="1"/>
</dbReference>
<evidence type="ECO:0000255" key="1">
    <source>
        <dbReference type="HAMAP-Rule" id="MF_00186"/>
    </source>
</evidence>
<keyword id="KW-0067">ATP-binding</keyword>
<keyword id="KW-0319">Glycerol metabolism</keyword>
<keyword id="KW-0418">Kinase</keyword>
<keyword id="KW-0547">Nucleotide-binding</keyword>
<keyword id="KW-0808">Transferase</keyword>
<reference key="1">
    <citation type="submission" date="2008-05" db="EMBL/GenBank/DDBJ databases">
        <title>Complete sequence of chromosome 1 of Ralstonia pickettii 12J.</title>
        <authorList>
            <person name="Lucas S."/>
            <person name="Copeland A."/>
            <person name="Lapidus A."/>
            <person name="Glavina del Rio T."/>
            <person name="Dalin E."/>
            <person name="Tice H."/>
            <person name="Bruce D."/>
            <person name="Goodwin L."/>
            <person name="Pitluck S."/>
            <person name="Meincke L."/>
            <person name="Brettin T."/>
            <person name="Detter J.C."/>
            <person name="Han C."/>
            <person name="Kuske C.R."/>
            <person name="Schmutz J."/>
            <person name="Larimer F."/>
            <person name="Land M."/>
            <person name="Hauser L."/>
            <person name="Kyrpides N."/>
            <person name="Mikhailova N."/>
            <person name="Marsh T."/>
            <person name="Richardson P."/>
        </authorList>
    </citation>
    <scope>NUCLEOTIDE SEQUENCE [LARGE SCALE GENOMIC DNA]</scope>
    <source>
        <strain>12J</strain>
    </source>
</reference>
<comment type="function">
    <text evidence="1">Key enzyme in the regulation of glycerol uptake and metabolism. Catalyzes the phosphorylation of glycerol to yield sn-glycerol 3-phosphate.</text>
</comment>
<comment type="catalytic activity">
    <reaction evidence="1">
        <text>glycerol + ATP = sn-glycerol 3-phosphate + ADP + H(+)</text>
        <dbReference type="Rhea" id="RHEA:21644"/>
        <dbReference type="ChEBI" id="CHEBI:15378"/>
        <dbReference type="ChEBI" id="CHEBI:17754"/>
        <dbReference type="ChEBI" id="CHEBI:30616"/>
        <dbReference type="ChEBI" id="CHEBI:57597"/>
        <dbReference type="ChEBI" id="CHEBI:456216"/>
        <dbReference type="EC" id="2.7.1.30"/>
    </reaction>
</comment>
<comment type="activity regulation">
    <text evidence="1">Inhibited by fructose 1,6-bisphosphate (FBP).</text>
</comment>
<comment type="pathway">
    <text evidence="1">Polyol metabolism; glycerol degradation via glycerol kinase pathway; sn-glycerol 3-phosphate from glycerol: step 1/1.</text>
</comment>
<comment type="similarity">
    <text evidence="1">Belongs to the FGGY kinase family.</text>
</comment>
<sequence length="498" mass="54003">MEYLLALDQGTSSSRAIVFNRAGQIVASAQQEFPQHFPQPGWVEHDPFDIWNSQLATCRAALEQAKLSAADMAALGITNQRETTMVWERATGKPIFNAIVWQDRRTEAICESLRAEGLEDEVRKRTGLIIDPYFSATKLRWILDHVDGGRERAARGELAFGTIDSWLVWQLTRGRLHVTDVSNASRTMLWNIHTGEWDADLMRALDIHPSLLPEVHPSAHQFGQTDADWLGASLTIGGIAGDQQSALFGQACFKPGMAKNTYGTGCFMLLNTGDKAVQSHNGLISTAACQSGTKRSYALEGSVFVGGAVVQWLRDGLRAIQRSADVEGLAASVPDSGGVVFVPSFTGLGAPYWDPTAQGAIVGLSRGTTIGHIARAALESIAFQSTALLQAMTRDAVSTISELRVDGGASANNLLLQFQADLLGIPVVRPEIIETTALGAAYLAGIATGFYRDEAEVAQQWRASRTFHPVISRDEAAHRIAQWEMAVAQVRLPTTRGH</sequence>
<accession>B2UF87</accession>
<protein>
    <recommendedName>
        <fullName evidence="1">Glycerol kinase</fullName>
        <ecNumber evidence="1">2.7.1.30</ecNumber>
    </recommendedName>
    <alternativeName>
        <fullName evidence="1">ATP:glycerol 3-phosphotransferase</fullName>
    </alternativeName>
    <alternativeName>
        <fullName evidence="1">Glycerokinase</fullName>
        <shortName evidence="1">GK</shortName>
    </alternativeName>
</protein>
<gene>
    <name evidence="1" type="primary">glpK</name>
    <name type="ordered locus">Rpic_3334</name>
</gene>
<organism>
    <name type="scientific">Ralstonia pickettii (strain 12J)</name>
    <dbReference type="NCBI Taxonomy" id="402626"/>
    <lineage>
        <taxon>Bacteria</taxon>
        <taxon>Pseudomonadati</taxon>
        <taxon>Pseudomonadota</taxon>
        <taxon>Betaproteobacteria</taxon>
        <taxon>Burkholderiales</taxon>
        <taxon>Burkholderiaceae</taxon>
        <taxon>Ralstonia</taxon>
    </lineage>
</organism>
<feature type="chain" id="PRO_1000098750" description="Glycerol kinase">
    <location>
        <begin position="1"/>
        <end position="498"/>
    </location>
</feature>
<feature type="binding site" evidence="1">
    <location>
        <position position="11"/>
    </location>
    <ligand>
        <name>ADP</name>
        <dbReference type="ChEBI" id="CHEBI:456216"/>
    </ligand>
</feature>
<feature type="binding site" evidence="1">
    <location>
        <position position="11"/>
    </location>
    <ligand>
        <name>ATP</name>
        <dbReference type="ChEBI" id="CHEBI:30616"/>
    </ligand>
</feature>
<feature type="binding site" evidence="1">
    <location>
        <position position="11"/>
    </location>
    <ligand>
        <name>sn-glycerol 3-phosphate</name>
        <dbReference type="ChEBI" id="CHEBI:57597"/>
    </ligand>
</feature>
<feature type="binding site" evidence="1">
    <location>
        <position position="12"/>
    </location>
    <ligand>
        <name>ATP</name>
        <dbReference type="ChEBI" id="CHEBI:30616"/>
    </ligand>
</feature>
<feature type="binding site" evidence="1">
    <location>
        <position position="13"/>
    </location>
    <ligand>
        <name>ATP</name>
        <dbReference type="ChEBI" id="CHEBI:30616"/>
    </ligand>
</feature>
<feature type="binding site" evidence="1">
    <location>
        <position position="15"/>
    </location>
    <ligand>
        <name>ADP</name>
        <dbReference type="ChEBI" id="CHEBI:456216"/>
    </ligand>
</feature>
<feature type="binding site" evidence="1">
    <location>
        <position position="81"/>
    </location>
    <ligand>
        <name>glycerol</name>
        <dbReference type="ChEBI" id="CHEBI:17754"/>
    </ligand>
</feature>
<feature type="binding site" evidence="1">
    <location>
        <position position="81"/>
    </location>
    <ligand>
        <name>sn-glycerol 3-phosphate</name>
        <dbReference type="ChEBI" id="CHEBI:57597"/>
    </ligand>
</feature>
<feature type="binding site" evidence="1">
    <location>
        <position position="82"/>
    </location>
    <ligand>
        <name>glycerol</name>
        <dbReference type="ChEBI" id="CHEBI:17754"/>
    </ligand>
</feature>
<feature type="binding site" evidence="1">
    <location>
        <position position="82"/>
    </location>
    <ligand>
        <name>sn-glycerol 3-phosphate</name>
        <dbReference type="ChEBI" id="CHEBI:57597"/>
    </ligand>
</feature>
<feature type="binding site" evidence="1">
    <location>
        <position position="133"/>
    </location>
    <ligand>
        <name>glycerol</name>
        <dbReference type="ChEBI" id="CHEBI:17754"/>
    </ligand>
</feature>
<feature type="binding site" evidence="1">
    <location>
        <position position="133"/>
    </location>
    <ligand>
        <name>sn-glycerol 3-phosphate</name>
        <dbReference type="ChEBI" id="CHEBI:57597"/>
    </ligand>
</feature>
<feature type="binding site" evidence="1">
    <location>
        <position position="242"/>
    </location>
    <ligand>
        <name>glycerol</name>
        <dbReference type="ChEBI" id="CHEBI:17754"/>
    </ligand>
</feature>
<feature type="binding site" evidence="1">
    <location>
        <position position="242"/>
    </location>
    <ligand>
        <name>sn-glycerol 3-phosphate</name>
        <dbReference type="ChEBI" id="CHEBI:57597"/>
    </ligand>
</feature>
<feature type="binding site" evidence="1">
    <location>
        <position position="243"/>
    </location>
    <ligand>
        <name>glycerol</name>
        <dbReference type="ChEBI" id="CHEBI:17754"/>
    </ligand>
</feature>
<feature type="binding site" evidence="1">
    <location>
        <position position="264"/>
    </location>
    <ligand>
        <name>ADP</name>
        <dbReference type="ChEBI" id="CHEBI:456216"/>
    </ligand>
</feature>
<feature type="binding site" evidence="1">
    <location>
        <position position="264"/>
    </location>
    <ligand>
        <name>ATP</name>
        <dbReference type="ChEBI" id="CHEBI:30616"/>
    </ligand>
</feature>
<feature type="binding site" evidence="1">
    <location>
        <position position="307"/>
    </location>
    <ligand>
        <name>ADP</name>
        <dbReference type="ChEBI" id="CHEBI:456216"/>
    </ligand>
</feature>
<feature type="binding site" evidence="1">
    <location>
        <position position="307"/>
    </location>
    <ligand>
        <name>ATP</name>
        <dbReference type="ChEBI" id="CHEBI:30616"/>
    </ligand>
</feature>
<feature type="binding site" evidence="1">
    <location>
        <position position="311"/>
    </location>
    <ligand>
        <name>ATP</name>
        <dbReference type="ChEBI" id="CHEBI:30616"/>
    </ligand>
</feature>
<feature type="binding site" evidence="1">
    <location>
        <position position="408"/>
    </location>
    <ligand>
        <name>ADP</name>
        <dbReference type="ChEBI" id="CHEBI:456216"/>
    </ligand>
</feature>
<feature type="binding site" evidence="1">
    <location>
        <position position="408"/>
    </location>
    <ligand>
        <name>ATP</name>
        <dbReference type="ChEBI" id="CHEBI:30616"/>
    </ligand>
</feature>
<feature type="binding site" evidence="1">
    <location>
        <position position="412"/>
    </location>
    <ligand>
        <name>ADP</name>
        <dbReference type="ChEBI" id="CHEBI:456216"/>
    </ligand>
</feature>
<proteinExistence type="inferred from homology"/>